<comment type="function">
    <text evidence="1">Catalyzes the transfer of the enolpyruvyl moiety of phosphoenolpyruvate (PEP) to the 5-hydroxyl of shikimate-3-phosphate (S3P) to produce enolpyruvyl shikimate-3-phosphate and inorganic phosphate.</text>
</comment>
<comment type="catalytic activity">
    <reaction evidence="1">
        <text>3-phosphoshikimate + phosphoenolpyruvate = 5-O-(1-carboxyvinyl)-3-phosphoshikimate + phosphate</text>
        <dbReference type="Rhea" id="RHEA:21256"/>
        <dbReference type="ChEBI" id="CHEBI:43474"/>
        <dbReference type="ChEBI" id="CHEBI:57701"/>
        <dbReference type="ChEBI" id="CHEBI:58702"/>
        <dbReference type="ChEBI" id="CHEBI:145989"/>
        <dbReference type="EC" id="2.5.1.19"/>
    </reaction>
    <physiologicalReaction direction="left-to-right" evidence="1">
        <dbReference type="Rhea" id="RHEA:21257"/>
    </physiologicalReaction>
</comment>
<comment type="pathway">
    <text evidence="1">Metabolic intermediate biosynthesis; chorismate biosynthesis; chorismate from D-erythrose 4-phosphate and phosphoenolpyruvate: step 6/7.</text>
</comment>
<comment type="subunit">
    <text evidence="1">Monomer.</text>
</comment>
<comment type="subcellular location">
    <subcellularLocation>
        <location evidence="1">Cytoplasm</location>
    </subcellularLocation>
</comment>
<comment type="similarity">
    <text evidence="1">Belongs to the EPSP synthase family.</text>
</comment>
<organism>
    <name type="scientific">Nitrobacter hamburgensis (strain DSM 10229 / NCIMB 13809 / X14)</name>
    <dbReference type="NCBI Taxonomy" id="323097"/>
    <lineage>
        <taxon>Bacteria</taxon>
        <taxon>Pseudomonadati</taxon>
        <taxon>Pseudomonadota</taxon>
        <taxon>Alphaproteobacteria</taxon>
        <taxon>Hyphomicrobiales</taxon>
        <taxon>Nitrobacteraceae</taxon>
        <taxon>Nitrobacter</taxon>
    </lineage>
</organism>
<accession>Q1QRT1</accession>
<evidence type="ECO:0000255" key="1">
    <source>
        <dbReference type="HAMAP-Rule" id="MF_00210"/>
    </source>
</evidence>
<reference key="1">
    <citation type="submission" date="2006-03" db="EMBL/GenBank/DDBJ databases">
        <title>Complete sequence of chromosome of Nitrobacter hamburgensis X14.</title>
        <authorList>
            <consortium name="US DOE Joint Genome Institute"/>
            <person name="Copeland A."/>
            <person name="Lucas S."/>
            <person name="Lapidus A."/>
            <person name="Barry K."/>
            <person name="Detter J.C."/>
            <person name="Glavina del Rio T."/>
            <person name="Hammon N."/>
            <person name="Israni S."/>
            <person name="Dalin E."/>
            <person name="Tice H."/>
            <person name="Pitluck S."/>
            <person name="Chain P."/>
            <person name="Malfatti S."/>
            <person name="Shin M."/>
            <person name="Vergez L."/>
            <person name="Schmutz J."/>
            <person name="Larimer F."/>
            <person name="Land M."/>
            <person name="Hauser L."/>
            <person name="Kyrpides N."/>
            <person name="Ivanova N."/>
            <person name="Ward B."/>
            <person name="Arp D."/>
            <person name="Klotz M."/>
            <person name="Stein L."/>
            <person name="O'Mullan G."/>
            <person name="Starkenburg S."/>
            <person name="Sayavedra L."/>
            <person name="Poret-Peterson A.T."/>
            <person name="Gentry M.E."/>
            <person name="Bruce D."/>
            <person name="Richardson P."/>
        </authorList>
    </citation>
    <scope>NUCLEOTIDE SEQUENCE [LARGE SCALE GENOMIC DNA]</scope>
    <source>
        <strain>DSM 10229 / NCIMB 13809 / X14</strain>
    </source>
</reference>
<name>AROA_NITHX</name>
<gene>
    <name evidence="1" type="primary">aroA</name>
    <name type="ordered locus">Nham_0165</name>
</gene>
<protein>
    <recommendedName>
        <fullName evidence="1">3-phosphoshikimate 1-carboxyvinyltransferase</fullName>
        <ecNumber evidence="1">2.5.1.19</ecNumber>
    </recommendedName>
    <alternativeName>
        <fullName evidence="1">5-enolpyruvylshikimate-3-phosphate synthase</fullName>
        <shortName evidence="1">EPSP synthase</shortName>
        <shortName evidence="1">EPSPS</shortName>
    </alternativeName>
</protein>
<feature type="chain" id="PRO_1000058602" description="3-phosphoshikimate 1-carboxyvinyltransferase">
    <location>
        <begin position="1"/>
        <end position="449"/>
    </location>
</feature>
<feature type="active site" description="Proton acceptor" evidence="1">
    <location>
        <position position="332"/>
    </location>
</feature>
<feature type="binding site" evidence="1">
    <location>
        <position position="28"/>
    </location>
    <ligand>
        <name>3-phosphoshikimate</name>
        <dbReference type="ChEBI" id="CHEBI:145989"/>
    </ligand>
</feature>
<feature type="binding site" evidence="1">
    <location>
        <position position="28"/>
    </location>
    <ligand>
        <name>phosphoenolpyruvate</name>
        <dbReference type="ChEBI" id="CHEBI:58702"/>
    </ligand>
</feature>
<feature type="binding site" evidence="1">
    <location>
        <position position="29"/>
    </location>
    <ligand>
        <name>3-phosphoshikimate</name>
        <dbReference type="ChEBI" id="CHEBI:145989"/>
    </ligand>
</feature>
<feature type="binding site" evidence="1">
    <location>
        <position position="33"/>
    </location>
    <ligand>
        <name>3-phosphoshikimate</name>
        <dbReference type="ChEBI" id="CHEBI:145989"/>
    </ligand>
</feature>
<feature type="binding site" evidence="1">
    <location>
        <position position="105"/>
    </location>
    <ligand>
        <name>phosphoenolpyruvate</name>
        <dbReference type="ChEBI" id="CHEBI:58702"/>
    </ligand>
</feature>
<feature type="binding site" evidence="1">
    <location>
        <position position="133"/>
    </location>
    <ligand>
        <name>phosphoenolpyruvate</name>
        <dbReference type="ChEBI" id="CHEBI:58702"/>
    </ligand>
</feature>
<feature type="binding site" evidence="1">
    <location>
        <position position="179"/>
    </location>
    <ligand>
        <name>3-phosphoshikimate</name>
        <dbReference type="ChEBI" id="CHEBI:145989"/>
    </ligand>
</feature>
<feature type="binding site" evidence="1">
    <location>
        <position position="181"/>
    </location>
    <ligand>
        <name>3-phosphoshikimate</name>
        <dbReference type="ChEBI" id="CHEBI:145989"/>
    </ligand>
</feature>
<feature type="binding site" evidence="1">
    <location>
        <position position="181"/>
    </location>
    <ligand>
        <name>phosphoenolpyruvate</name>
        <dbReference type="ChEBI" id="CHEBI:58702"/>
    </ligand>
</feature>
<feature type="binding site" evidence="1">
    <location>
        <position position="332"/>
    </location>
    <ligand>
        <name>3-phosphoshikimate</name>
        <dbReference type="ChEBI" id="CHEBI:145989"/>
    </ligand>
</feature>
<feature type="binding site" evidence="1">
    <location>
        <position position="359"/>
    </location>
    <ligand>
        <name>3-phosphoshikimate</name>
        <dbReference type="ChEBI" id="CHEBI:145989"/>
    </ligand>
</feature>
<feature type="binding site" evidence="1">
    <location>
        <position position="363"/>
    </location>
    <ligand>
        <name>phosphoenolpyruvate</name>
        <dbReference type="ChEBI" id="CHEBI:58702"/>
    </ligand>
</feature>
<feature type="binding site" evidence="1">
    <location>
        <position position="406"/>
    </location>
    <ligand>
        <name>phosphoenolpyruvate</name>
        <dbReference type="ChEBI" id="CHEBI:58702"/>
    </ligand>
</feature>
<dbReference type="EC" id="2.5.1.19" evidence="1"/>
<dbReference type="EMBL" id="CP000319">
    <property type="protein sequence ID" value="ABE61066.1"/>
    <property type="molecule type" value="Genomic_DNA"/>
</dbReference>
<dbReference type="RefSeq" id="WP_011508772.1">
    <property type="nucleotide sequence ID" value="NC_007964.1"/>
</dbReference>
<dbReference type="SMR" id="Q1QRT1"/>
<dbReference type="STRING" id="323097.Nham_0165"/>
<dbReference type="KEGG" id="nha:Nham_0165"/>
<dbReference type="eggNOG" id="COG0128">
    <property type="taxonomic scope" value="Bacteria"/>
</dbReference>
<dbReference type="HOGENOM" id="CLU_024321_0_1_5"/>
<dbReference type="OrthoDB" id="9809920at2"/>
<dbReference type="UniPathway" id="UPA00053">
    <property type="reaction ID" value="UER00089"/>
</dbReference>
<dbReference type="Proteomes" id="UP000001953">
    <property type="component" value="Chromosome"/>
</dbReference>
<dbReference type="GO" id="GO:0005737">
    <property type="term" value="C:cytoplasm"/>
    <property type="evidence" value="ECO:0007669"/>
    <property type="project" value="UniProtKB-SubCell"/>
</dbReference>
<dbReference type="GO" id="GO:0003866">
    <property type="term" value="F:3-phosphoshikimate 1-carboxyvinyltransferase activity"/>
    <property type="evidence" value="ECO:0007669"/>
    <property type="project" value="UniProtKB-UniRule"/>
</dbReference>
<dbReference type="GO" id="GO:0008652">
    <property type="term" value="P:amino acid biosynthetic process"/>
    <property type="evidence" value="ECO:0007669"/>
    <property type="project" value="UniProtKB-KW"/>
</dbReference>
<dbReference type="GO" id="GO:0009073">
    <property type="term" value="P:aromatic amino acid family biosynthetic process"/>
    <property type="evidence" value="ECO:0007669"/>
    <property type="project" value="UniProtKB-KW"/>
</dbReference>
<dbReference type="GO" id="GO:0009423">
    <property type="term" value="P:chorismate biosynthetic process"/>
    <property type="evidence" value="ECO:0007669"/>
    <property type="project" value="UniProtKB-UniRule"/>
</dbReference>
<dbReference type="CDD" id="cd01556">
    <property type="entry name" value="EPSP_synthase"/>
    <property type="match status" value="1"/>
</dbReference>
<dbReference type="FunFam" id="3.65.10.10:FF:000005">
    <property type="entry name" value="3-phosphoshikimate 1-carboxyvinyltransferase"/>
    <property type="match status" value="1"/>
</dbReference>
<dbReference type="FunFam" id="3.65.10.10:FF:000006">
    <property type="entry name" value="3-phosphoshikimate 1-carboxyvinyltransferase"/>
    <property type="match status" value="1"/>
</dbReference>
<dbReference type="Gene3D" id="3.65.10.10">
    <property type="entry name" value="Enolpyruvate transferase domain"/>
    <property type="match status" value="2"/>
</dbReference>
<dbReference type="HAMAP" id="MF_00210">
    <property type="entry name" value="EPSP_synth"/>
    <property type="match status" value="1"/>
</dbReference>
<dbReference type="InterPro" id="IPR001986">
    <property type="entry name" value="Enolpyruvate_Tfrase_dom"/>
</dbReference>
<dbReference type="InterPro" id="IPR036968">
    <property type="entry name" value="Enolpyruvate_Tfrase_sf"/>
</dbReference>
<dbReference type="InterPro" id="IPR006264">
    <property type="entry name" value="EPSP_synthase"/>
</dbReference>
<dbReference type="InterPro" id="IPR023193">
    <property type="entry name" value="EPSP_synthase_CS"/>
</dbReference>
<dbReference type="InterPro" id="IPR013792">
    <property type="entry name" value="RNA3'P_cycl/enolpyr_Trfase_a/b"/>
</dbReference>
<dbReference type="NCBIfam" id="TIGR01356">
    <property type="entry name" value="aroA"/>
    <property type="match status" value="1"/>
</dbReference>
<dbReference type="PANTHER" id="PTHR21090">
    <property type="entry name" value="AROM/DEHYDROQUINATE SYNTHASE"/>
    <property type="match status" value="1"/>
</dbReference>
<dbReference type="PANTHER" id="PTHR21090:SF5">
    <property type="entry name" value="PENTAFUNCTIONAL AROM POLYPEPTIDE"/>
    <property type="match status" value="1"/>
</dbReference>
<dbReference type="Pfam" id="PF00275">
    <property type="entry name" value="EPSP_synthase"/>
    <property type="match status" value="1"/>
</dbReference>
<dbReference type="PIRSF" id="PIRSF000505">
    <property type="entry name" value="EPSPS"/>
    <property type="match status" value="1"/>
</dbReference>
<dbReference type="SUPFAM" id="SSF55205">
    <property type="entry name" value="EPT/RTPC-like"/>
    <property type="match status" value="1"/>
</dbReference>
<dbReference type="PROSITE" id="PS00104">
    <property type="entry name" value="EPSP_SYNTHASE_1"/>
    <property type="match status" value="1"/>
</dbReference>
<keyword id="KW-0028">Amino-acid biosynthesis</keyword>
<keyword id="KW-0057">Aromatic amino acid biosynthesis</keyword>
<keyword id="KW-0963">Cytoplasm</keyword>
<keyword id="KW-1185">Reference proteome</keyword>
<keyword id="KW-0808">Transferase</keyword>
<proteinExistence type="inferred from homology"/>
<sequence>MTHSGQPAPLEARKCQSLIGRVRVPGDKSISHRALILGALAVGETRIAGLLEGEDVLNTAKAMQALGAKVERRIDDKSGIVWSVRGVGTSGFATPEAPLDFGNSGTGCRLVMGAVAGCPIVATFDGDGSLRSRPMRRILDPLELMGARVTGESDGGRLPLTLAGARDPLPIVYRTPVASAQIKSAVLLAGLSAPGITTVIESEASRDHTELMLKHFGAQIVSVSDGTHGRKISLTGQPELHGAAVTVPADPSSAAFPIVAALITEGSDIVLTDVMTNPLRTGLFATLREMGASIEESETRLDAGEPMAQLRVRASKLRGVEVPAARAPSMIDEYLVLAVAAAFAEGTTVMRGLHELRVKESDRLEAAAAMLRVNGVAVEIAGDDLIVEGRGRVPGGGLVTTHMDHRIAMSALAMGCASDAPVKVDDTAFIATSFPDFVPMMRRLGADFA</sequence>